<name>CH60_CALS4</name>
<organism>
    <name type="scientific">Caldanaerobacter subterraneus subsp. tengcongensis (strain DSM 15242 / JCM 11007 / NBRC 100824 / MB4)</name>
    <name type="common">Thermoanaerobacter tengcongensis</name>
    <dbReference type="NCBI Taxonomy" id="273068"/>
    <lineage>
        <taxon>Bacteria</taxon>
        <taxon>Bacillati</taxon>
        <taxon>Bacillota</taxon>
        <taxon>Clostridia</taxon>
        <taxon>Thermoanaerobacterales</taxon>
        <taxon>Thermoanaerobacteraceae</taxon>
        <taxon>Caldanaerobacter</taxon>
    </lineage>
</organism>
<evidence type="ECO:0000255" key="1">
    <source>
        <dbReference type="HAMAP-Rule" id="MF_00600"/>
    </source>
</evidence>
<comment type="function">
    <text evidence="1">Together with its co-chaperonin GroES, plays an essential role in assisting protein folding. The GroEL-GroES system forms a nano-cage that allows encapsulation of the non-native substrate proteins and provides a physical environment optimized to promote and accelerate protein folding.</text>
</comment>
<comment type="catalytic activity">
    <reaction evidence="1">
        <text>ATP + H2O + a folded polypeptide = ADP + phosphate + an unfolded polypeptide.</text>
        <dbReference type="EC" id="5.6.1.7"/>
    </reaction>
</comment>
<comment type="subunit">
    <text evidence="1">Forms a cylinder of 14 subunits composed of two heptameric rings stacked back-to-back. Interacts with the co-chaperonin GroES.</text>
</comment>
<comment type="subcellular location">
    <subcellularLocation>
        <location evidence="1">Cytoplasm</location>
    </subcellularLocation>
</comment>
<comment type="similarity">
    <text evidence="1">Belongs to the chaperonin (HSP60) family.</text>
</comment>
<reference key="1">
    <citation type="journal article" date="2002" name="Genome Res.">
        <title>A complete sequence of the T. tengcongensis genome.</title>
        <authorList>
            <person name="Bao Q."/>
            <person name="Tian Y."/>
            <person name="Li W."/>
            <person name="Xu Z."/>
            <person name="Xuan Z."/>
            <person name="Hu S."/>
            <person name="Dong W."/>
            <person name="Yang J."/>
            <person name="Chen Y."/>
            <person name="Xue Y."/>
            <person name="Xu Y."/>
            <person name="Lai X."/>
            <person name="Huang L."/>
            <person name="Dong X."/>
            <person name="Ma Y."/>
            <person name="Ling L."/>
            <person name="Tan H."/>
            <person name="Chen R."/>
            <person name="Wang J."/>
            <person name="Yu J."/>
            <person name="Yang H."/>
        </authorList>
    </citation>
    <scope>NUCLEOTIDE SEQUENCE [LARGE SCALE GENOMIC DNA]</scope>
    <source>
        <strain>DSM 15242 / JCM 11007 / NBRC 100824 / MB4</strain>
    </source>
</reference>
<protein>
    <recommendedName>
        <fullName evidence="1">Chaperonin GroEL</fullName>
        <ecNumber evidence="1">5.6.1.7</ecNumber>
    </recommendedName>
    <alternativeName>
        <fullName evidence="1">60 kDa chaperonin</fullName>
    </alternativeName>
    <alternativeName>
        <fullName evidence="1">Chaperonin-60</fullName>
        <shortName evidence="1">Cpn60</shortName>
    </alternativeName>
</protein>
<proteinExistence type="inferred from homology"/>
<keyword id="KW-0067">ATP-binding</keyword>
<keyword id="KW-0143">Chaperone</keyword>
<keyword id="KW-0963">Cytoplasm</keyword>
<keyword id="KW-0413">Isomerase</keyword>
<keyword id="KW-0547">Nucleotide-binding</keyword>
<keyword id="KW-1185">Reference proteome</keyword>
<feature type="chain" id="PRO_0000063584" description="Chaperonin GroEL">
    <location>
        <begin position="1"/>
        <end position="540"/>
    </location>
</feature>
<feature type="binding site" evidence="1">
    <location>
        <begin position="29"/>
        <end position="32"/>
    </location>
    <ligand>
        <name>ATP</name>
        <dbReference type="ChEBI" id="CHEBI:30616"/>
    </ligand>
</feature>
<feature type="binding site" evidence="1">
    <location>
        <begin position="86"/>
        <end position="90"/>
    </location>
    <ligand>
        <name>ATP</name>
        <dbReference type="ChEBI" id="CHEBI:30616"/>
    </ligand>
</feature>
<feature type="binding site" evidence="1">
    <location>
        <position position="413"/>
    </location>
    <ligand>
        <name>ATP</name>
        <dbReference type="ChEBI" id="CHEBI:30616"/>
    </ligand>
</feature>
<feature type="binding site" evidence="1">
    <location>
        <position position="495"/>
    </location>
    <ligand>
        <name>ATP</name>
        <dbReference type="ChEBI" id="CHEBI:30616"/>
    </ligand>
</feature>
<accession>Q8R5T7</accession>
<dbReference type="EC" id="5.6.1.7" evidence="1"/>
<dbReference type="EMBL" id="AE008691">
    <property type="protein sequence ID" value="AAM23851.1"/>
    <property type="molecule type" value="Genomic_DNA"/>
</dbReference>
<dbReference type="RefSeq" id="WP_011024996.1">
    <property type="nucleotide sequence ID" value="NC_003869.1"/>
</dbReference>
<dbReference type="SMR" id="Q8R5T7"/>
<dbReference type="STRING" id="273068.TTE0580"/>
<dbReference type="KEGG" id="tte:TTE0580"/>
<dbReference type="eggNOG" id="COG0459">
    <property type="taxonomic scope" value="Bacteria"/>
</dbReference>
<dbReference type="HOGENOM" id="CLU_016503_3_0_9"/>
<dbReference type="OrthoDB" id="9766614at2"/>
<dbReference type="Proteomes" id="UP000000555">
    <property type="component" value="Chromosome"/>
</dbReference>
<dbReference type="GO" id="GO:0005737">
    <property type="term" value="C:cytoplasm"/>
    <property type="evidence" value="ECO:0007669"/>
    <property type="project" value="UniProtKB-SubCell"/>
</dbReference>
<dbReference type="GO" id="GO:0005524">
    <property type="term" value="F:ATP binding"/>
    <property type="evidence" value="ECO:0007669"/>
    <property type="project" value="UniProtKB-UniRule"/>
</dbReference>
<dbReference type="GO" id="GO:0140662">
    <property type="term" value="F:ATP-dependent protein folding chaperone"/>
    <property type="evidence" value="ECO:0007669"/>
    <property type="project" value="InterPro"/>
</dbReference>
<dbReference type="GO" id="GO:0016853">
    <property type="term" value="F:isomerase activity"/>
    <property type="evidence" value="ECO:0007669"/>
    <property type="project" value="UniProtKB-KW"/>
</dbReference>
<dbReference type="GO" id="GO:0051082">
    <property type="term" value="F:unfolded protein binding"/>
    <property type="evidence" value="ECO:0007669"/>
    <property type="project" value="UniProtKB-UniRule"/>
</dbReference>
<dbReference type="GO" id="GO:0042026">
    <property type="term" value="P:protein refolding"/>
    <property type="evidence" value="ECO:0007669"/>
    <property type="project" value="UniProtKB-UniRule"/>
</dbReference>
<dbReference type="CDD" id="cd03344">
    <property type="entry name" value="GroEL"/>
    <property type="match status" value="1"/>
</dbReference>
<dbReference type="FunFam" id="3.50.7.10:FF:000001">
    <property type="entry name" value="60 kDa chaperonin"/>
    <property type="match status" value="1"/>
</dbReference>
<dbReference type="Gene3D" id="3.50.7.10">
    <property type="entry name" value="GroEL"/>
    <property type="match status" value="1"/>
</dbReference>
<dbReference type="Gene3D" id="1.10.560.10">
    <property type="entry name" value="GroEL-like equatorial domain"/>
    <property type="match status" value="1"/>
</dbReference>
<dbReference type="Gene3D" id="3.30.260.10">
    <property type="entry name" value="TCP-1-like chaperonin intermediate domain"/>
    <property type="match status" value="1"/>
</dbReference>
<dbReference type="HAMAP" id="MF_00600">
    <property type="entry name" value="CH60"/>
    <property type="match status" value="1"/>
</dbReference>
<dbReference type="InterPro" id="IPR018370">
    <property type="entry name" value="Chaperonin_Cpn60_CS"/>
</dbReference>
<dbReference type="InterPro" id="IPR001844">
    <property type="entry name" value="Cpn60/GroEL"/>
</dbReference>
<dbReference type="InterPro" id="IPR002423">
    <property type="entry name" value="Cpn60/GroEL/TCP-1"/>
</dbReference>
<dbReference type="InterPro" id="IPR027409">
    <property type="entry name" value="GroEL-like_apical_dom_sf"/>
</dbReference>
<dbReference type="InterPro" id="IPR027413">
    <property type="entry name" value="GROEL-like_equatorial_sf"/>
</dbReference>
<dbReference type="InterPro" id="IPR027410">
    <property type="entry name" value="TCP-1-like_intermed_sf"/>
</dbReference>
<dbReference type="NCBIfam" id="TIGR02348">
    <property type="entry name" value="GroEL"/>
    <property type="match status" value="1"/>
</dbReference>
<dbReference type="NCBIfam" id="NF000592">
    <property type="entry name" value="PRK00013.1"/>
    <property type="match status" value="1"/>
</dbReference>
<dbReference type="NCBIfam" id="NF009487">
    <property type="entry name" value="PRK12849.1"/>
    <property type="match status" value="1"/>
</dbReference>
<dbReference type="NCBIfam" id="NF009488">
    <property type="entry name" value="PRK12850.1"/>
    <property type="match status" value="1"/>
</dbReference>
<dbReference type="NCBIfam" id="NF009489">
    <property type="entry name" value="PRK12851.1"/>
    <property type="match status" value="1"/>
</dbReference>
<dbReference type="PANTHER" id="PTHR45633">
    <property type="entry name" value="60 KDA HEAT SHOCK PROTEIN, MITOCHONDRIAL"/>
    <property type="match status" value="1"/>
</dbReference>
<dbReference type="Pfam" id="PF00118">
    <property type="entry name" value="Cpn60_TCP1"/>
    <property type="match status" value="1"/>
</dbReference>
<dbReference type="PRINTS" id="PR00298">
    <property type="entry name" value="CHAPERONIN60"/>
</dbReference>
<dbReference type="SUPFAM" id="SSF52029">
    <property type="entry name" value="GroEL apical domain-like"/>
    <property type="match status" value="1"/>
</dbReference>
<dbReference type="SUPFAM" id="SSF48592">
    <property type="entry name" value="GroEL equatorial domain-like"/>
    <property type="match status" value="1"/>
</dbReference>
<dbReference type="SUPFAM" id="SSF54849">
    <property type="entry name" value="GroEL-intermediate domain like"/>
    <property type="match status" value="1"/>
</dbReference>
<dbReference type="PROSITE" id="PS00296">
    <property type="entry name" value="CHAPERONINS_CPN60"/>
    <property type="match status" value="1"/>
</dbReference>
<gene>
    <name evidence="1" type="primary">groEL</name>
    <name evidence="1" type="synonym">groL</name>
    <name type="ordered locus">TTE0580</name>
</gene>
<sequence>MAKQIKYGEEARKALERGVNAVANTVKVTLGPRGRNVVLDKKYGTPTVTNDGVTIAREIELEDPFENQGAQLLKEAATKTNDVAGDGTTTATLLAQVMVLEGLKNLAAGANPMLLRRGMAKAVEAAVEGLRRISKPIDNKESIAHVAAISAADEEIGQLIAEAMEKVGKDGVITVEESKTIGTTLEVVEGMQFDRGYISPYMVTDAEKMEAVLEEPVILITDKKLSSVQDLLPLLEQIVQHGKKLLIIADDVEGEALATLVVNKLRGTFSCVAVKAPGFGDRRKEMLQDIAILTGGQVISEELGYDLKDVTLDMLGRARQVKVTKEHTTIVGGAGNPEDIKKRINQIKAQIEETTSDYDREKLQERLAKLAGGVAVIQVGAATETELKEKKHRIEDALAATKAAVEEGIVPGGGVALLNVIEDVQKVVDSLEGDFKTGAKIVLKALEAPVRQIAENAGVDGSIIVEKIKAAKDPNFGYDAYREEFTDMIKRGIIDPTKVTRTALQNAASIASMILTTEAIVVDVPEKEKSNIPGAGMDMM</sequence>